<organism>
    <name type="scientific">Dichelobacter nodosus (strain VCS1703A)</name>
    <dbReference type="NCBI Taxonomy" id="246195"/>
    <lineage>
        <taxon>Bacteria</taxon>
        <taxon>Pseudomonadati</taxon>
        <taxon>Pseudomonadota</taxon>
        <taxon>Gammaproteobacteria</taxon>
        <taxon>Cardiobacteriales</taxon>
        <taxon>Cardiobacteriaceae</taxon>
        <taxon>Dichelobacter</taxon>
    </lineage>
</organism>
<accession>A5EVQ5</accession>
<protein>
    <recommendedName>
        <fullName evidence="1">tRNA U34 carboxymethyltransferase</fullName>
        <ecNumber evidence="1">2.5.1.-</ecNumber>
    </recommendedName>
</protein>
<evidence type="ECO:0000255" key="1">
    <source>
        <dbReference type="HAMAP-Rule" id="MF_01590"/>
    </source>
</evidence>
<sequence>MNAALRKWHRAVTLLPALSVYDETAQRVFTAAYDRRHKSFEDWLTAIAQLPLIEPRAVHLNQAVVTAEGAGDEIAIETLLKALMPWRKGPFSLCGVSLDCEWRSDFKYQRLLDAGFSVSGKKVLDVGTGNGYFLYRFLGSGAQCAVGVDPSWLYFAQFLALQKFFQQNRAVYLPTTLDDLSLEGFDCVLAMGVLYHRRDPLAFLAQLRNAVVCGGDLVIETLVVDGDAQTVYMPKQEYVGMHNVWFLPSIAALCRWLERLNFRIELCSEAVETTINEQRRTRWVNSFSLADFLQRAPSAPPPKRAFVIAKRL</sequence>
<proteinExistence type="inferred from homology"/>
<feature type="chain" id="PRO_0000313912" description="tRNA U34 carboxymethyltransferase">
    <location>
        <begin position="1"/>
        <end position="312"/>
    </location>
</feature>
<feature type="binding site" evidence="1">
    <location>
        <position position="88"/>
    </location>
    <ligand>
        <name>carboxy-S-adenosyl-L-methionine</name>
        <dbReference type="ChEBI" id="CHEBI:134278"/>
    </ligand>
</feature>
<feature type="binding site" evidence="1">
    <location>
        <position position="102"/>
    </location>
    <ligand>
        <name>carboxy-S-adenosyl-L-methionine</name>
        <dbReference type="ChEBI" id="CHEBI:134278"/>
    </ligand>
</feature>
<feature type="binding site" evidence="1">
    <location>
        <position position="107"/>
    </location>
    <ligand>
        <name>carboxy-S-adenosyl-L-methionine</name>
        <dbReference type="ChEBI" id="CHEBI:134278"/>
    </ligand>
</feature>
<feature type="binding site" evidence="1">
    <location>
        <position position="127"/>
    </location>
    <ligand>
        <name>carboxy-S-adenosyl-L-methionine</name>
        <dbReference type="ChEBI" id="CHEBI:134278"/>
    </ligand>
</feature>
<feature type="binding site" evidence="1">
    <location>
        <begin position="149"/>
        <end position="151"/>
    </location>
    <ligand>
        <name>carboxy-S-adenosyl-L-methionine</name>
        <dbReference type="ChEBI" id="CHEBI:134278"/>
    </ligand>
</feature>
<feature type="binding site" evidence="1">
    <location>
        <begin position="177"/>
        <end position="178"/>
    </location>
    <ligand>
        <name>carboxy-S-adenosyl-L-methionine</name>
        <dbReference type="ChEBI" id="CHEBI:134278"/>
    </ligand>
</feature>
<feature type="binding site" evidence="1">
    <location>
        <position position="191"/>
    </location>
    <ligand>
        <name>carboxy-S-adenosyl-L-methionine</name>
        <dbReference type="ChEBI" id="CHEBI:134278"/>
    </ligand>
</feature>
<feature type="binding site" evidence="1">
    <location>
        <position position="195"/>
    </location>
    <ligand>
        <name>carboxy-S-adenosyl-L-methionine</name>
        <dbReference type="ChEBI" id="CHEBI:134278"/>
    </ligand>
</feature>
<feature type="binding site" evidence="1">
    <location>
        <position position="304"/>
    </location>
    <ligand>
        <name>carboxy-S-adenosyl-L-methionine</name>
        <dbReference type="ChEBI" id="CHEBI:134278"/>
    </ligand>
</feature>
<name>CMOB_DICNV</name>
<keyword id="KW-1185">Reference proteome</keyword>
<keyword id="KW-0808">Transferase</keyword>
<keyword id="KW-0819">tRNA processing</keyword>
<reference key="1">
    <citation type="journal article" date="2007" name="Nat. Biotechnol.">
        <title>Genome sequence and identification of candidate vaccine antigens from the animal pathogen Dichelobacter nodosus.</title>
        <authorList>
            <person name="Myers G.S.A."/>
            <person name="Parker D."/>
            <person name="Al-Hasani K."/>
            <person name="Kennan R.M."/>
            <person name="Seemann T."/>
            <person name="Ren Q."/>
            <person name="Badger J.H."/>
            <person name="Selengut J.D."/>
            <person name="Deboy R.T."/>
            <person name="Tettelin H."/>
            <person name="Boyce J.D."/>
            <person name="McCarl V.P."/>
            <person name="Han X."/>
            <person name="Nelson W.C."/>
            <person name="Madupu R."/>
            <person name="Mohamoud Y."/>
            <person name="Holley T."/>
            <person name="Fedorova N."/>
            <person name="Khouri H."/>
            <person name="Bottomley S.P."/>
            <person name="Whittington R.J."/>
            <person name="Adler B."/>
            <person name="Songer J.G."/>
            <person name="Rood J.I."/>
            <person name="Paulsen I.T."/>
        </authorList>
    </citation>
    <scope>NUCLEOTIDE SEQUENCE [LARGE SCALE GENOMIC DNA]</scope>
    <source>
        <strain>VCS1703A</strain>
    </source>
</reference>
<comment type="function">
    <text evidence="1">Catalyzes carboxymethyl transfer from carboxy-S-adenosyl-L-methionine (Cx-SAM) to 5-hydroxyuridine (ho5U) to form 5-carboxymethoxyuridine (cmo5U) at position 34 in tRNAs.</text>
</comment>
<comment type="catalytic activity">
    <reaction evidence="1">
        <text>carboxy-S-adenosyl-L-methionine + 5-hydroxyuridine(34) in tRNA = 5-carboxymethoxyuridine(34) in tRNA + S-adenosyl-L-homocysteine + H(+)</text>
        <dbReference type="Rhea" id="RHEA:52848"/>
        <dbReference type="Rhea" id="RHEA-COMP:13381"/>
        <dbReference type="Rhea" id="RHEA-COMP:13383"/>
        <dbReference type="ChEBI" id="CHEBI:15378"/>
        <dbReference type="ChEBI" id="CHEBI:57856"/>
        <dbReference type="ChEBI" id="CHEBI:134278"/>
        <dbReference type="ChEBI" id="CHEBI:136877"/>
        <dbReference type="ChEBI" id="CHEBI:136879"/>
    </reaction>
</comment>
<comment type="subunit">
    <text evidence="1">Homotetramer.</text>
</comment>
<comment type="similarity">
    <text evidence="1">Belongs to the class I-like SAM-binding methyltransferase superfamily. CmoB family.</text>
</comment>
<gene>
    <name evidence="1" type="primary">cmoB</name>
    <name type="ordered locus">DNO_0482</name>
</gene>
<dbReference type="EC" id="2.5.1.-" evidence="1"/>
<dbReference type="EMBL" id="CP000513">
    <property type="protein sequence ID" value="ABQ13756.1"/>
    <property type="molecule type" value="Genomic_DNA"/>
</dbReference>
<dbReference type="RefSeq" id="WP_012030818.1">
    <property type="nucleotide sequence ID" value="NC_009446.1"/>
</dbReference>
<dbReference type="SMR" id="A5EVQ5"/>
<dbReference type="STRING" id="246195.DNO_0482"/>
<dbReference type="KEGG" id="dno:DNO_0482"/>
<dbReference type="eggNOG" id="COG2227">
    <property type="taxonomic scope" value="Bacteria"/>
</dbReference>
<dbReference type="HOGENOM" id="CLU_052665_0_0_6"/>
<dbReference type="OrthoDB" id="9773188at2"/>
<dbReference type="Proteomes" id="UP000000248">
    <property type="component" value="Chromosome"/>
</dbReference>
<dbReference type="GO" id="GO:0008168">
    <property type="term" value="F:methyltransferase activity"/>
    <property type="evidence" value="ECO:0007669"/>
    <property type="project" value="TreeGrafter"/>
</dbReference>
<dbReference type="GO" id="GO:0016765">
    <property type="term" value="F:transferase activity, transferring alkyl or aryl (other than methyl) groups"/>
    <property type="evidence" value="ECO:0007669"/>
    <property type="project" value="UniProtKB-UniRule"/>
</dbReference>
<dbReference type="GO" id="GO:0002098">
    <property type="term" value="P:tRNA wobble uridine modification"/>
    <property type="evidence" value="ECO:0007669"/>
    <property type="project" value="InterPro"/>
</dbReference>
<dbReference type="CDD" id="cd02440">
    <property type="entry name" value="AdoMet_MTases"/>
    <property type="match status" value="1"/>
</dbReference>
<dbReference type="Gene3D" id="3.40.50.150">
    <property type="entry name" value="Vaccinia Virus protein VP39"/>
    <property type="match status" value="1"/>
</dbReference>
<dbReference type="HAMAP" id="MF_01590">
    <property type="entry name" value="tRNA_carboxymethyltr_CmoB"/>
    <property type="match status" value="1"/>
</dbReference>
<dbReference type="InterPro" id="IPR010017">
    <property type="entry name" value="CmoB"/>
</dbReference>
<dbReference type="InterPro" id="IPR027555">
    <property type="entry name" value="Mo5U34_MeTrfas-like"/>
</dbReference>
<dbReference type="InterPro" id="IPR029063">
    <property type="entry name" value="SAM-dependent_MTases_sf"/>
</dbReference>
<dbReference type="NCBIfam" id="NF011650">
    <property type="entry name" value="PRK15068.1"/>
    <property type="match status" value="1"/>
</dbReference>
<dbReference type="NCBIfam" id="TIGR00452">
    <property type="entry name" value="tRNA 5-methoxyuridine(34)/uridine 5-oxyacetic acid(34) synthase CmoB"/>
    <property type="match status" value="1"/>
</dbReference>
<dbReference type="PANTHER" id="PTHR43464">
    <property type="entry name" value="METHYLTRANSFERASE"/>
    <property type="match status" value="1"/>
</dbReference>
<dbReference type="PANTHER" id="PTHR43464:SF95">
    <property type="entry name" value="TRNA U34 CARBOXYMETHYLTRANSFERASE"/>
    <property type="match status" value="1"/>
</dbReference>
<dbReference type="Pfam" id="PF08003">
    <property type="entry name" value="Methyltransf_9"/>
    <property type="match status" value="1"/>
</dbReference>
<dbReference type="SUPFAM" id="SSF53335">
    <property type="entry name" value="S-adenosyl-L-methionine-dependent methyltransferases"/>
    <property type="match status" value="1"/>
</dbReference>